<comment type="function">
    <text evidence="1">Formation of pseudouridine at positions 38, 39 and 40 in the anticodon stem and loop of transfer RNAs.</text>
</comment>
<comment type="catalytic activity">
    <reaction evidence="1">
        <text>uridine(38/39/40) in tRNA = pseudouridine(38/39/40) in tRNA</text>
        <dbReference type="Rhea" id="RHEA:22376"/>
        <dbReference type="Rhea" id="RHEA-COMP:10085"/>
        <dbReference type="Rhea" id="RHEA-COMP:10087"/>
        <dbReference type="ChEBI" id="CHEBI:65314"/>
        <dbReference type="ChEBI" id="CHEBI:65315"/>
        <dbReference type="EC" id="5.4.99.12"/>
    </reaction>
</comment>
<comment type="subunit">
    <text evidence="1">Homodimer.</text>
</comment>
<comment type="similarity">
    <text evidence="1">Belongs to the tRNA pseudouridine synthase TruA family.</text>
</comment>
<protein>
    <recommendedName>
        <fullName evidence="1">tRNA pseudouridine synthase A</fullName>
        <ecNumber evidence="1">5.4.99.12</ecNumber>
    </recommendedName>
    <alternativeName>
        <fullName evidence="1">tRNA pseudouridine(38-40) synthase</fullName>
    </alternativeName>
    <alternativeName>
        <fullName evidence="1">tRNA pseudouridylate synthase I</fullName>
    </alternativeName>
    <alternativeName>
        <fullName evidence="1">tRNA-uridine isomerase I</fullName>
    </alternativeName>
</protein>
<feature type="chain" id="PRO_1000017154" description="tRNA pseudouridine synthase A">
    <location>
        <begin position="1"/>
        <end position="255"/>
    </location>
</feature>
<feature type="active site" description="Nucleophile" evidence="1">
    <location>
        <position position="52"/>
    </location>
</feature>
<feature type="binding site" evidence="1">
    <location>
        <position position="111"/>
    </location>
    <ligand>
        <name>substrate</name>
    </ligand>
</feature>
<accession>Q3J0D9</accession>
<sequence>MPRYALRIEYDGGPFAGWQRQAAQASVQGAIETALGRLEPGPHTIAAAGRTDTGVHASGQVAHCDLVREWDPFRLAGALNAHLKPLPVAIVAAARVPEEFHARFSAVERRYLFRLLARRAPEVHDRGRVWRVPHPLDPEAMRAGAAHLVGRHDFTTFRAAGCQAASPVKTLDALTLETVEGMNGTEYRFHLRARSFLHNQVRSIVGTLERVGAGAWTPDQVREALDARDRAACGPVSPPQGLYLTGVGYPADPFA</sequence>
<reference key="1">
    <citation type="submission" date="2005-09" db="EMBL/GenBank/DDBJ databases">
        <title>Complete sequence of chromosome 1 of Rhodobacter sphaeroides 2.4.1.</title>
        <authorList>
            <person name="Copeland A."/>
            <person name="Lucas S."/>
            <person name="Lapidus A."/>
            <person name="Barry K."/>
            <person name="Detter J.C."/>
            <person name="Glavina T."/>
            <person name="Hammon N."/>
            <person name="Israni S."/>
            <person name="Pitluck S."/>
            <person name="Richardson P."/>
            <person name="Mackenzie C."/>
            <person name="Choudhary M."/>
            <person name="Larimer F."/>
            <person name="Hauser L.J."/>
            <person name="Land M."/>
            <person name="Donohue T.J."/>
            <person name="Kaplan S."/>
        </authorList>
    </citation>
    <scope>NUCLEOTIDE SEQUENCE [LARGE SCALE GENOMIC DNA]</scope>
    <source>
        <strain>ATCC 17023 / DSM 158 / JCM 6121 / CCUG 31486 / LMG 2827 / NBRC 12203 / NCIMB 8253 / ATH 2.4.1.</strain>
    </source>
</reference>
<dbReference type="EC" id="5.4.99.12" evidence="1"/>
<dbReference type="EMBL" id="CP000143">
    <property type="protein sequence ID" value="ABA79745.1"/>
    <property type="molecule type" value="Genomic_DNA"/>
</dbReference>
<dbReference type="RefSeq" id="WP_011338327.1">
    <property type="nucleotide sequence ID" value="NC_007493.2"/>
</dbReference>
<dbReference type="RefSeq" id="YP_353646.1">
    <property type="nucleotide sequence ID" value="NC_007493.2"/>
</dbReference>
<dbReference type="SMR" id="Q3J0D9"/>
<dbReference type="STRING" id="272943.RSP_0571"/>
<dbReference type="EnsemblBacteria" id="ABA79745">
    <property type="protein sequence ID" value="ABA79745"/>
    <property type="gene ID" value="RSP_0571"/>
</dbReference>
<dbReference type="GeneID" id="3718023"/>
<dbReference type="KEGG" id="rsp:RSP_0571"/>
<dbReference type="PATRIC" id="fig|272943.9.peg.2523"/>
<dbReference type="eggNOG" id="COG0101">
    <property type="taxonomic scope" value="Bacteria"/>
</dbReference>
<dbReference type="OrthoDB" id="9811823at2"/>
<dbReference type="PhylomeDB" id="Q3J0D9"/>
<dbReference type="Proteomes" id="UP000002703">
    <property type="component" value="Chromosome 1"/>
</dbReference>
<dbReference type="GO" id="GO:0003723">
    <property type="term" value="F:RNA binding"/>
    <property type="evidence" value="ECO:0007669"/>
    <property type="project" value="InterPro"/>
</dbReference>
<dbReference type="GO" id="GO:0160147">
    <property type="term" value="F:tRNA pseudouridine(38-40) synthase activity"/>
    <property type="evidence" value="ECO:0007669"/>
    <property type="project" value="UniProtKB-EC"/>
</dbReference>
<dbReference type="GO" id="GO:0031119">
    <property type="term" value="P:tRNA pseudouridine synthesis"/>
    <property type="evidence" value="ECO:0007669"/>
    <property type="project" value="UniProtKB-UniRule"/>
</dbReference>
<dbReference type="CDD" id="cd02570">
    <property type="entry name" value="PseudoU_synth_EcTruA"/>
    <property type="match status" value="1"/>
</dbReference>
<dbReference type="FunFam" id="3.30.70.580:FF:000001">
    <property type="entry name" value="tRNA pseudouridine synthase A"/>
    <property type="match status" value="1"/>
</dbReference>
<dbReference type="Gene3D" id="3.30.70.660">
    <property type="entry name" value="Pseudouridine synthase I, catalytic domain, C-terminal subdomain"/>
    <property type="match status" value="1"/>
</dbReference>
<dbReference type="Gene3D" id="3.30.70.580">
    <property type="entry name" value="Pseudouridine synthase I, catalytic domain, N-terminal subdomain"/>
    <property type="match status" value="1"/>
</dbReference>
<dbReference type="HAMAP" id="MF_00171">
    <property type="entry name" value="TruA"/>
    <property type="match status" value="1"/>
</dbReference>
<dbReference type="InterPro" id="IPR020103">
    <property type="entry name" value="PsdUridine_synth_cat_dom_sf"/>
</dbReference>
<dbReference type="InterPro" id="IPR001406">
    <property type="entry name" value="PsdUridine_synth_TruA"/>
</dbReference>
<dbReference type="InterPro" id="IPR020097">
    <property type="entry name" value="PsdUridine_synth_TruA_a/b_dom"/>
</dbReference>
<dbReference type="InterPro" id="IPR020095">
    <property type="entry name" value="PsdUridine_synth_TruA_C"/>
</dbReference>
<dbReference type="InterPro" id="IPR020094">
    <property type="entry name" value="TruA/RsuA/RluB/E/F_N"/>
</dbReference>
<dbReference type="NCBIfam" id="TIGR00071">
    <property type="entry name" value="hisT_truA"/>
    <property type="match status" value="1"/>
</dbReference>
<dbReference type="PANTHER" id="PTHR11142">
    <property type="entry name" value="PSEUDOURIDYLATE SYNTHASE"/>
    <property type="match status" value="1"/>
</dbReference>
<dbReference type="PANTHER" id="PTHR11142:SF0">
    <property type="entry name" value="TRNA PSEUDOURIDINE SYNTHASE-LIKE 1"/>
    <property type="match status" value="1"/>
</dbReference>
<dbReference type="Pfam" id="PF01416">
    <property type="entry name" value="PseudoU_synth_1"/>
    <property type="match status" value="2"/>
</dbReference>
<dbReference type="PIRSF" id="PIRSF001430">
    <property type="entry name" value="tRNA_psdUrid_synth"/>
    <property type="match status" value="1"/>
</dbReference>
<dbReference type="SUPFAM" id="SSF55120">
    <property type="entry name" value="Pseudouridine synthase"/>
    <property type="match status" value="1"/>
</dbReference>
<proteinExistence type="inferred from homology"/>
<name>TRUA_CERS4</name>
<organism>
    <name type="scientific">Cereibacter sphaeroides (strain ATCC 17023 / DSM 158 / JCM 6121 / CCUG 31486 / LMG 2827 / NBRC 12203 / NCIMB 8253 / ATH 2.4.1.)</name>
    <name type="common">Rhodobacter sphaeroides</name>
    <dbReference type="NCBI Taxonomy" id="272943"/>
    <lineage>
        <taxon>Bacteria</taxon>
        <taxon>Pseudomonadati</taxon>
        <taxon>Pseudomonadota</taxon>
        <taxon>Alphaproteobacteria</taxon>
        <taxon>Rhodobacterales</taxon>
        <taxon>Paracoccaceae</taxon>
        <taxon>Cereibacter</taxon>
    </lineage>
</organism>
<keyword id="KW-0413">Isomerase</keyword>
<keyword id="KW-1185">Reference proteome</keyword>
<keyword id="KW-0819">tRNA processing</keyword>
<gene>
    <name evidence="1" type="primary">truA</name>
    <name type="ordered locus">RHOS4_21770</name>
    <name type="ORF">RSP_0571</name>
</gene>
<evidence type="ECO:0000255" key="1">
    <source>
        <dbReference type="HAMAP-Rule" id="MF_00171"/>
    </source>
</evidence>